<proteinExistence type="inferred from homology"/>
<reference key="1">
    <citation type="journal article" date="2014" name="Stand. Genomic Sci.">
        <title>Complete genome sequence of Anabaena variabilis ATCC 29413.</title>
        <authorList>
            <person name="Thiel T."/>
            <person name="Pratte B.S."/>
            <person name="Zhong J."/>
            <person name="Goodwin L."/>
            <person name="Copeland A."/>
            <person name="Lucas S."/>
            <person name="Han C."/>
            <person name="Pitluck S."/>
            <person name="Land M.L."/>
            <person name="Kyrpides N.C."/>
            <person name="Woyke T."/>
        </authorList>
    </citation>
    <scope>NUCLEOTIDE SEQUENCE [LARGE SCALE GENOMIC DNA]</scope>
    <source>
        <strain>ATCC 29413 / PCC 7937</strain>
    </source>
</reference>
<accession>Q3M9V9</accession>
<feature type="chain" id="PRO_1000184642" description="ATP synthase subunit delta">
    <location>
        <begin position="1"/>
        <end position="183"/>
    </location>
</feature>
<protein>
    <recommendedName>
        <fullName evidence="1">ATP synthase subunit delta</fullName>
    </recommendedName>
    <alternativeName>
        <fullName evidence="1">ATP synthase F(1) sector subunit delta</fullName>
    </alternativeName>
    <alternativeName>
        <fullName evidence="1">F-type ATPase subunit delta</fullName>
        <shortName evidence="1">F-ATPase subunit delta</shortName>
    </alternativeName>
</protein>
<gene>
    <name evidence="1" type="primary">atpH</name>
    <name evidence="1" type="synonym">atpD</name>
    <name type="ordered locus">Ava_2612</name>
</gene>
<organism>
    <name type="scientific">Trichormus variabilis (strain ATCC 29413 / PCC 7937)</name>
    <name type="common">Anabaena variabilis</name>
    <dbReference type="NCBI Taxonomy" id="240292"/>
    <lineage>
        <taxon>Bacteria</taxon>
        <taxon>Bacillati</taxon>
        <taxon>Cyanobacteriota</taxon>
        <taxon>Cyanophyceae</taxon>
        <taxon>Nostocales</taxon>
        <taxon>Nostocaceae</taxon>
        <taxon>Trichormus</taxon>
    </lineage>
</organism>
<name>ATPD_TRIV2</name>
<evidence type="ECO:0000255" key="1">
    <source>
        <dbReference type="HAMAP-Rule" id="MF_01416"/>
    </source>
</evidence>
<keyword id="KW-0066">ATP synthesis</keyword>
<keyword id="KW-0139">CF(1)</keyword>
<keyword id="KW-0375">Hydrogen ion transport</keyword>
<keyword id="KW-0406">Ion transport</keyword>
<keyword id="KW-0472">Membrane</keyword>
<keyword id="KW-0793">Thylakoid</keyword>
<keyword id="KW-0813">Transport</keyword>
<sequence length="183" mass="20394">MTSKVANTEVAQPYAQALLSIAKSKSLTEEFGTDARTLLNLLAENQQLRNFIDNPFIAAENKKALIKQILSEASPYLRNFLLLLVDKRRIFFLEEILQQYLALLRQLNQTVLAEVTSAVALTEDQQQAVKEKVLALTKARQVELATKVDSDLIGGVIIKVGSQVIDSSIRGQLRRLSLRLSNS</sequence>
<dbReference type="EMBL" id="CP000117">
    <property type="protein sequence ID" value="ABA22227.1"/>
    <property type="molecule type" value="Genomic_DNA"/>
</dbReference>
<dbReference type="SMR" id="Q3M9V9"/>
<dbReference type="STRING" id="240292.Ava_2612"/>
<dbReference type="KEGG" id="ava:Ava_2612"/>
<dbReference type="eggNOG" id="COG0712">
    <property type="taxonomic scope" value="Bacteria"/>
</dbReference>
<dbReference type="HOGENOM" id="CLU_085114_4_0_3"/>
<dbReference type="Proteomes" id="UP000002533">
    <property type="component" value="Chromosome"/>
</dbReference>
<dbReference type="GO" id="GO:0031676">
    <property type="term" value="C:plasma membrane-derived thylakoid membrane"/>
    <property type="evidence" value="ECO:0007669"/>
    <property type="project" value="UniProtKB-SubCell"/>
</dbReference>
<dbReference type="GO" id="GO:0045259">
    <property type="term" value="C:proton-transporting ATP synthase complex"/>
    <property type="evidence" value="ECO:0007669"/>
    <property type="project" value="UniProtKB-KW"/>
</dbReference>
<dbReference type="GO" id="GO:0046933">
    <property type="term" value="F:proton-transporting ATP synthase activity, rotational mechanism"/>
    <property type="evidence" value="ECO:0007669"/>
    <property type="project" value="UniProtKB-UniRule"/>
</dbReference>
<dbReference type="Gene3D" id="1.10.520.20">
    <property type="entry name" value="N-terminal domain of the delta subunit of the F1F0-ATP synthase"/>
    <property type="match status" value="1"/>
</dbReference>
<dbReference type="HAMAP" id="MF_01416">
    <property type="entry name" value="ATP_synth_delta_bact"/>
    <property type="match status" value="1"/>
</dbReference>
<dbReference type="InterPro" id="IPR026015">
    <property type="entry name" value="ATP_synth_OSCP/delta_N_sf"/>
</dbReference>
<dbReference type="InterPro" id="IPR020781">
    <property type="entry name" value="ATPase_OSCP/d_CS"/>
</dbReference>
<dbReference type="InterPro" id="IPR000711">
    <property type="entry name" value="ATPase_OSCP/dsu"/>
</dbReference>
<dbReference type="NCBIfam" id="TIGR01145">
    <property type="entry name" value="ATP_synt_delta"/>
    <property type="match status" value="1"/>
</dbReference>
<dbReference type="NCBIfam" id="NF004402">
    <property type="entry name" value="PRK05758.2-2"/>
    <property type="match status" value="1"/>
</dbReference>
<dbReference type="PANTHER" id="PTHR11910">
    <property type="entry name" value="ATP SYNTHASE DELTA CHAIN"/>
    <property type="match status" value="1"/>
</dbReference>
<dbReference type="Pfam" id="PF00213">
    <property type="entry name" value="OSCP"/>
    <property type="match status" value="1"/>
</dbReference>
<dbReference type="PRINTS" id="PR00125">
    <property type="entry name" value="ATPASEDELTA"/>
</dbReference>
<dbReference type="SUPFAM" id="SSF47928">
    <property type="entry name" value="N-terminal domain of the delta subunit of the F1F0-ATP synthase"/>
    <property type="match status" value="1"/>
</dbReference>
<dbReference type="PROSITE" id="PS00389">
    <property type="entry name" value="ATPASE_DELTA"/>
    <property type="match status" value="1"/>
</dbReference>
<comment type="function">
    <text evidence="1">F(1)F(0) ATP synthase produces ATP from ADP in the presence of a proton or sodium gradient. F-type ATPases consist of two structural domains, F(1) containing the extramembraneous catalytic core and F(0) containing the membrane proton channel, linked together by a central stalk and a peripheral stalk. During catalysis, ATP synthesis in the catalytic domain of F(1) is coupled via a rotary mechanism of the central stalk subunits to proton translocation.</text>
</comment>
<comment type="function">
    <text evidence="1">This protein is part of the stalk that links CF(0) to CF(1). It either transmits conformational changes from CF(0) to CF(1) or is implicated in proton conduction.</text>
</comment>
<comment type="subunit">
    <text evidence="1">F-type ATPases have 2 components, F(1) - the catalytic core - and F(0) - the membrane proton channel. F(1) has five subunits: alpha(3), beta(3), gamma(1), delta(1), epsilon(1). CF(0) has four main subunits: a(1), b(1), b'(1) and c(10-14). The alpha and beta chains form an alternating ring which encloses part of the gamma chain. F(1) is attached to F(0) by a central stalk formed by the gamma and epsilon chains, while a peripheral stalk is formed by the delta, b and b' chains.</text>
</comment>
<comment type="subcellular location">
    <subcellularLocation>
        <location evidence="1">Cellular thylakoid membrane</location>
        <topology evidence="1">Peripheral membrane protein</topology>
    </subcellularLocation>
</comment>
<comment type="similarity">
    <text evidence="1">Belongs to the ATPase delta chain family.</text>
</comment>